<comment type="function">
    <text evidence="1">RNaseP catalyzes the removal of the 5'-leader sequence from pre-tRNA to produce the mature 5'-terminus. It can also cleave other RNA substrates such as 4.5S RNA. The protein component plays an auxiliary but essential role in vivo by binding to the 5'-leader sequence and broadening the substrate specificity of the ribozyme.</text>
</comment>
<comment type="catalytic activity">
    <reaction evidence="1">
        <text>Endonucleolytic cleavage of RNA, removing 5'-extranucleotides from tRNA precursor.</text>
        <dbReference type="EC" id="3.1.26.5"/>
    </reaction>
</comment>
<comment type="subunit">
    <text evidence="1">Consists of a catalytic RNA component (M1 or rnpB) and a protein subunit.</text>
</comment>
<comment type="similarity">
    <text evidence="1">Belongs to the RnpA family.</text>
</comment>
<dbReference type="EC" id="3.1.26.5" evidence="1"/>
<dbReference type="EMBL" id="CP000728">
    <property type="protein sequence ID" value="ABS40857.1"/>
    <property type="molecule type" value="Genomic_DNA"/>
</dbReference>
<dbReference type="RefSeq" id="WP_003359393.1">
    <property type="nucleotide sequence ID" value="NC_009699.1"/>
</dbReference>
<dbReference type="SMR" id="A7GJP3"/>
<dbReference type="GeneID" id="5204338"/>
<dbReference type="KEGG" id="cbf:CLI_3892"/>
<dbReference type="HOGENOM" id="CLU_117179_9_3_9"/>
<dbReference type="Proteomes" id="UP000002410">
    <property type="component" value="Chromosome"/>
</dbReference>
<dbReference type="GO" id="GO:0030677">
    <property type="term" value="C:ribonuclease P complex"/>
    <property type="evidence" value="ECO:0007669"/>
    <property type="project" value="TreeGrafter"/>
</dbReference>
<dbReference type="GO" id="GO:0042781">
    <property type="term" value="F:3'-tRNA processing endoribonuclease activity"/>
    <property type="evidence" value="ECO:0007669"/>
    <property type="project" value="TreeGrafter"/>
</dbReference>
<dbReference type="GO" id="GO:0004526">
    <property type="term" value="F:ribonuclease P activity"/>
    <property type="evidence" value="ECO:0007669"/>
    <property type="project" value="UniProtKB-UniRule"/>
</dbReference>
<dbReference type="GO" id="GO:0000049">
    <property type="term" value="F:tRNA binding"/>
    <property type="evidence" value="ECO:0007669"/>
    <property type="project" value="UniProtKB-UniRule"/>
</dbReference>
<dbReference type="GO" id="GO:0001682">
    <property type="term" value="P:tRNA 5'-leader removal"/>
    <property type="evidence" value="ECO:0007669"/>
    <property type="project" value="UniProtKB-UniRule"/>
</dbReference>
<dbReference type="FunFam" id="3.30.230.10:FF:000106">
    <property type="entry name" value="Ribonuclease P protein component"/>
    <property type="match status" value="1"/>
</dbReference>
<dbReference type="Gene3D" id="3.30.230.10">
    <property type="match status" value="1"/>
</dbReference>
<dbReference type="HAMAP" id="MF_00227">
    <property type="entry name" value="RNase_P"/>
    <property type="match status" value="1"/>
</dbReference>
<dbReference type="InterPro" id="IPR020568">
    <property type="entry name" value="Ribosomal_Su5_D2-typ_SF"/>
</dbReference>
<dbReference type="InterPro" id="IPR014721">
    <property type="entry name" value="Ribsml_uS5_D2-typ_fold_subgr"/>
</dbReference>
<dbReference type="InterPro" id="IPR000100">
    <property type="entry name" value="RNase_P"/>
</dbReference>
<dbReference type="NCBIfam" id="TIGR00188">
    <property type="entry name" value="rnpA"/>
    <property type="match status" value="1"/>
</dbReference>
<dbReference type="PANTHER" id="PTHR33992">
    <property type="entry name" value="RIBONUCLEASE P PROTEIN COMPONENT"/>
    <property type="match status" value="1"/>
</dbReference>
<dbReference type="PANTHER" id="PTHR33992:SF1">
    <property type="entry name" value="RIBONUCLEASE P PROTEIN COMPONENT"/>
    <property type="match status" value="1"/>
</dbReference>
<dbReference type="Pfam" id="PF00825">
    <property type="entry name" value="Ribonuclease_P"/>
    <property type="match status" value="1"/>
</dbReference>
<dbReference type="SUPFAM" id="SSF54211">
    <property type="entry name" value="Ribosomal protein S5 domain 2-like"/>
    <property type="match status" value="1"/>
</dbReference>
<accession>A7GJP3</accession>
<evidence type="ECO:0000255" key="1">
    <source>
        <dbReference type="HAMAP-Rule" id="MF_00227"/>
    </source>
</evidence>
<gene>
    <name evidence="1" type="primary">rnpA</name>
    <name type="ordered locus">CLI_3892</name>
</gene>
<organism>
    <name type="scientific">Clostridium botulinum (strain Langeland / NCTC 10281 / Type F)</name>
    <dbReference type="NCBI Taxonomy" id="441772"/>
    <lineage>
        <taxon>Bacteria</taxon>
        <taxon>Bacillati</taxon>
        <taxon>Bacillota</taxon>
        <taxon>Clostridia</taxon>
        <taxon>Eubacteriales</taxon>
        <taxon>Clostridiaceae</taxon>
        <taxon>Clostridium</taxon>
    </lineage>
</organism>
<sequence length="111" mass="13184">MKENKIRKNKEFRHVYRRGKSYSNRLLVLYICKNRCNINRLGVSVSKKVGKSVIRNRVKRLIKESYRLNLDENMKKGYDLVFIARNSSNDRDYKDIESALINLLKKAGIYN</sequence>
<protein>
    <recommendedName>
        <fullName evidence="1">Ribonuclease P protein component</fullName>
        <shortName evidence="1">RNase P protein</shortName>
        <shortName evidence="1">RNaseP protein</shortName>
        <ecNumber evidence="1">3.1.26.5</ecNumber>
    </recommendedName>
    <alternativeName>
        <fullName evidence="1">Protein C5</fullName>
    </alternativeName>
</protein>
<proteinExistence type="inferred from homology"/>
<keyword id="KW-0255">Endonuclease</keyword>
<keyword id="KW-0378">Hydrolase</keyword>
<keyword id="KW-0540">Nuclease</keyword>
<keyword id="KW-0694">RNA-binding</keyword>
<keyword id="KW-0819">tRNA processing</keyword>
<name>RNPA_CLOBL</name>
<feature type="chain" id="PRO_1000021397" description="Ribonuclease P protein component">
    <location>
        <begin position="1"/>
        <end position="111"/>
    </location>
</feature>
<reference key="1">
    <citation type="submission" date="2007-06" db="EMBL/GenBank/DDBJ databases">
        <authorList>
            <person name="Brinkac L.M."/>
            <person name="Daugherty S."/>
            <person name="Dodson R.J."/>
            <person name="Madupu R."/>
            <person name="Brown J.L."/>
            <person name="Bruce D."/>
            <person name="Detter C."/>
            <person name="Munk C."/>
            <person name="Smith L.A."/>
            <person name="Smith T.J."/>
            <person name="White O."/>
            <person name="Brettin T.S."/>
        </authorList>
    </citation>
    <scope>NUCLEOTIDE SEQUENCE [LARGE SCALE GENOMIC DNA]</scope>
    <source>
        <strain>Langeland / NCTC 10281 / Type F</strain>
    </source>
</reference>